<feature type="chain" id="PRO_0000395447" description="Transcription factor Sp8">
    <location>
        <begin position="1"/>
        <end position="480"/>
    </location>
</feature>
<feature type="zinc finger region" description="C2H2-type 1" evidence="2">
    <location>
        <begin position="342"/>
        <end position="366"/>
    </location>
</feature>
<feature type="zinc finger region" description="C2H2-type 2" evidence="2">
    <location>
        <begin position="372"/>
        <end position="396"/>
    </location>
</feature>
<feature type="zinc finger region" description="C2H2-type 3" evidence="2">
    <location>
        <begin position="402"/>
        <end position="424"/>
    </location>
</feature>
<feature type="region of interest" description="Disordered" evidence="3">
    <location>
        <begin position="1"/>
        <end position="44"/>
    </location>
</feature>
<feature type="region of interest" description="Disordered" evidence="3">
    <location>
        <begin position="280"/>
        <end position="308"/>
    </location>
</feature>
<feature type="region of interest" description="Disordered" evidence="3">
    <location>
        <begin position="416"/>
        <end position="480"/>
    </location>
</feature>
<feature type="short sequence motif" description="9aaTAD" evidence="1">
    <location>
        <begin position="194"/>
        <end position="202"/>
    </location>
</feature>
<feature type="compositionally biased region" description="Low complexity" evidence="3">
    <location>
        <begin position="16"/>
        <end position="25"/>
    </location>
</feature>
<feature type="compositionally biased region" description="Gly residues" evidence="3">
    <location>
        <begin position="287"/>
        <end position="297"/>
    </location>
</feature>
<feature type="compositionally biased region" description="Low complexity" evidence="3">
    <location>
        <begin position="298"/>
        <end position="307"/>
    </location>
</feature>
<feature type="compositionally biased region" description="Gly residues" evidence="3">
    <location>
        <begin position="426"/>
        <end position="445"/>
    </location>
</feature>
<keyword id="KW-0238">DNA-binding</keyword>
<keyword id="KW-0479">Metal-binding</keyword>
<keyword id="KW-0539">Nucleus</keyword>
<keyword id="KW-1185">Reference proteome</keyword>
<keyword id="KW-0677">Repeat</keyword>
<keyword id="KW-0804">Transcription</keyword>
<keyword id="KW-0805">Transcription regulation</keyword>
<keyword id="KW-0862">Zinc</keyword>
<keyword id="KW-0863">Zinc-finger</keyword>
<accession>Q64HY5</accession>
<evidence type="ECO:0000250" key="1">
    <source>
        <dbReference type="UniProtKB" id="Q8IXZ3"/>
    </source>
</evidence>
<evidence type="ECO:0000255" key="2">
    <source>
        <dbReference type="PROSITE-ProRule" id="PRU00042"/>
    </source>
</evidence>
<evidence type="ECO:0000256" key="3">
    <source>
        <dbReference type="SAM" id="MobiDB-lite"/>
    </source>
</evidence>
<evidence type="ECO:0000269" key="4">
    <source>
    </source>
</evidence>
<evidence type="ECO:0000305" key="5"/>
<dbReference type="EMBL" id="AY591906">
    <property type="protein sequence ID" value="AAU04515.1"/>
    <property type="molecule type" value="mRNA"/>
</dbReference>
<dbReference type="RefSeq" id="NP_001185595.1">
    <property type="nucleotide sequence ID" value="NM_001198666.3"/>
</dbReference>
<dbReference type="SMR" id="Q64HY5"/>
<dbReference type="FunCoup" id="Q64HY5">
    <property type="interactions" value="6"/>
</dbReference>
<dbReference type="STRING" id="9031.ENSGALP00000046361"/>
<dbReference type="GeneID" id="776034"/>
<dbReference type="KEGG" id="gga:776034"/>
<dbReference type="CTD" id="221833"/>
<dbReference type="VEuPathDB" id="HostDB:geneid_776034"/>
<dbReference type="InParanoid" id="Q64HY5"/>
<dbReference type="OrthoDB" id="6365676at2759"/>
<dbReference type="PhylomeDB" id="Q64HY5"/>
<dbReference type="PRO" id="PR:Q64HY5"/>
<dbReference type="Proteomes" id="UP000000539">
    <property type="component" value="Chromosome 2"/>
</dbReference>
<dbReference type="Bgee" id="ENSGALG00000035725">
    <property type="expression patterns" value="Expressed in liver"/>
</dbReference>
<dbReference type="GO" id="GO:0005634">
    <property type="term" value="C:nucleus"/>
    <property type="evidence" value="ECO:0007669"/>
    <property type="project" value="UniProtKB-SubCell"/>
</dbReference>
<dbReference type="GO" id="GO:0000981">
    <property type="term" value="F:DNA-binding transcription factor activity, RNA polymerase II-specific"/>
    <property type="evidence" value="ECO:0000318"/>
    <property type="project" value="GO_Central"/>
</dbReference>
<dbReference type="GO" id="GO:0000978">
    <property type="term" value="F:RNA polymerase II cis-regulatory region sequence-specific DNA binding"/>
    <property type="evidence" value="ECO:0000318"/>
    <property type="project" value="GO_Central"/>
</dbReference>
<dbReference type="GO" id="GO:0008270">
    <property type="term" value="F:zinc ion binding"/>
    <property type="evidence" value="ECO:0007669"/>
    <property type="project" value="UniProtKB-KW"/>
</dbReference>
<dbReference type="GO" id="GO:0030326">
    <property type="term" value="P:embryonic limb morphogenesis"/>
    <property type="evidence" value="ECO:0000315"/>
    <property type="project" value="UniProtKB"/>
</dbReference>
<dbReference type="GO" id="GO:0006357">
    <property type="term" value="P:regulation of transcription by RNA polymerase II"/>
    <property type="evidence" value="ECO:0000318"/>
    <property type="project" value="GO_Central"/>
</dbReference>
<dbReference type="CDD" id="cd22538">
    <property type="entry name" value="SP8_N"/>
    <property type="match status" value="1"/>
</dbReference>
<dbReference type="FunFam" id="3.30.160.60:FF:000077">
    <property type="entry name" value="Sp8 transcription factor"/>
    <property type="match status" value="1"/>
</dbReference>
<dbReference type="FunFam" id="3.30.160.60:FF:000014">
    <property type="entry name" value="Transcription factor Sp3"/>
    <property type="match status" value="1"/>
</dbReference>
<dbReference type="FunFam" id="3.30.160.60:FF:000026">
    <property type="entry name" value="Transcription factor Sp3"/>
    <property type="match status" value="1"/>
</dbReference>
<dbReference type="Gene3D" id="3.30.160.60">
    <property type="entry name" value="Classic Zinc Finger"/>
    <property type="match status" value="3"/>
</dbReference>
<dbReference type="InterPro" id="IPR036236">
    <property type="entry name" value="Znf_C2H2_sf"/>
</dbReference>
<dbReference type="InterPro" id="IPR013087">
    <property type="entry name" value="Znf_C2H2_type"/>
</dbReference>
<dbReference type="PANTHER" id="PTHR23235">
    <property type="entry name" value="KRUEPPEL-LIKE TRANSCRIPTION FACTOR"/>
    <property type="match status" value="1"/>
</dbReference>
<dbReference type="PANTHER" id="PTHR23235:SF25">
    <property type="entry name" value="TRANSCRIPTION FACTOR SP8"/>
    <property type="match status" value="1"/>
</dbReference>
<dbReference type="Pfam" id="PF00096">
    <property type="entry name" value="zf-C2H2"/>
    <property type="match status" value="3"/>
</dbReference>
<dbReference type="SMART" id="SM00355">
    <property type="entry name" value="ZnF_C2H2"/>
    <property type="match status" value="3"/>
</dbReference>
<dbReference type="SUPFAM" id="SSF57667">
    <property type="entry name" value="beta-beta-alpha zinc fingers"/>
    <property type="match status" value="2"/>
</dbReference>
<dbReference type="PROSITE" id="PS00028">
    <property type="entry name" value="ZINC_FINGER_C2H2_1"/>
    <property type="match status" value="3"/>
</dbReference>
<dbReference type="PROSITE" id="PS50157">
    <property type="entry name" value="ZINC_FINGER_C2H2_2"/>
    <property type="match status" value="3"/>
</dbReference>
<sequence length="480" mass="47402">MLAATCNKIGSPSPSPSALSDSASSFGKGFHPWKRSSSSSSASAGSCGAVGSGLPGFGVAGAARNGSSAAAAAAAAAAAALVSDSFSCGGSPGSSAFSLTSSGAAAASSPFANDYSVFQAPGSAGGGGGGGGGGGGAAGQEAAHQPVFISKVHASVEGLQGIYPRVGMAHPYESWFKPSHPGLAAGEVGSAGASSWWDVGAGWIDVQSPNGAAALPGSLHPAAGGLQSSLHSPLGGYNSDYSGLGHSAFGGGASSHLLSPAGQHLMDGFKPVLPGSYPDSAPSPLAGAGGSMLGGGPAAPLSASPRSSARRYSGRATCDCPNCQEAERLGPAGASLRRKGLHSCHIPGCGKVYGKTSHLKAHLRWHTGERPFVCNWLFCGKRFTRSDELQRHLRTHTGEKRFACPVCNKRFMRSDHLSKHVKTHSGPGGAGGPGGGGPGPGPGGKKGSDTDSEHSAAGSPPCHSPELLPPPEPGHRNGLE</sequence>
<organism>
    <name type="scientific">Gallus gallus</name>
    <name type="common">Chicken</name>
    <dbReference type="NCBI Taxonomy" id="9031"/>
    <lineage>
        <taxon>Eukaryota</taxon>
        <taxon>Metazoa</taxon>
        <taxon>Chordata</taxon>
        <taxon>Craniata</taxon>
        <taxon>Vertebrata</taxon>
        <taxon>Euteleostomi</taxon>
        <taxon>Archelosauria</taxon>
        <taxon>Archosauria</taxon>
        <taxon>Dinosauria</taxon>
        <taxon>Saurischia</taxon>
        <taxon>Theropoda</taxon>
        <taxon>Coelurosauria</taxon>
        <taxon>Aves</taxon>
        <taxon>Neognathae</taxon>
        <taxon>Galloanserae</taxon>
        <taxon>Galliformes</taxon>
        <taxon>Phasianidae</taxon>
        <taxon>Phasianinae</taxon>
        <taxon>Gallus</taxon>
    </lineage>
</organism>
<name>SP8_CHICK</name>
<gene>
    <name type="primary">SP8</name>
</gene>
<reference key="1">
    <citation type="journal article" date="2004" name="Development">
        <title>Sp8 and Sp9, two closely related buttonhead-like transcription factors, regulate Fgf8 expression and limb outgrowth in vertebrate embryos.</title>
        <authorList>
            <person name="Kawakami Y."/>
            <person name="Rodriguez Esteban C."/>
            <person name="Matsui T."/>
            <person name="Rodriguez-Leon J."/>
            <person name="Kato S."/>
            <person name="Izpisua Belmonte J.C."/>
        </authorList>
    </citation>
    <scope>NUCLEOTIDE SEQUENCE [MRNA]</scope>
    <scope>FUNCTION</scope>
    <scope>DEVELOPMENTAL STAGE</scope>
</reference>
<proteinExistence type="evidence at transcript level"/>
<comment type="function">
    <text evidence="4">Transcription factor which plays a key role in limb development. Positively regulates FGF8 expression in the apical ectodermal ridge (AER) and contributes to limb outgrowth in embryos.</text>
</comment>
<comment type="subcellular location">
    <subcellularLocation>
        <location evidence="5">Nucleus</location>
    </subcellularLocation>
</comment>
<comment type="developmental stage">
    <text evidence="4">Detected in early stages of embryos as an oval and 2 stripes at HH stage 5, which becomes two lateral stripes at HH stage 7, running along the anteroposterior body axis from the head ectoderm to the anterior region of the primitive streak. At HH stage 8, strong expression in the anterior neuroectoderm, which forms the central nervous system, is observed, and at HH stage 9, expressed in the most anterior region of the forebrain, midbrain, neural groove and Hensen's node. At HH stage 15-16, the expression is seen in the surface ectoderm of the limb-forming fields, in addition to the neural tube. The expression in the limb field became confined to the distal region of the limb at HH stage 16 and 17, with still scattered signal visible in the surface ectoderm of the limb bud. Strongly expressed in the apical ectodermal ridge (AER) and weakly in the ectoderm in the developing limb bud at HH stage 21. The expression in the AER is detected throughout later stages of limb development.</text>
</comment>
<comment type="domain">
    <text evidence="1">The 9aaTAD motif is a transactivation domain present in a large number of yeast and animal transcription factors.</text>
</comment>
<comment type="similarity">
    <text evidence="5">Belongs to the Sp1 C2H2-type zinc-finger protein family.</text>
</comment>
<protein>
    <recommendedName>
        <fullName>Transcription factor Sp8</fullName>
    </recommendedName>
</protein>